<protein>
    <recommendedName>
        <fullName evidence="3">Nitrosuccinic acid decarboxylase npaB</fullName>
        <ecNumber evidence="1">4.1.1.-</ecNumber>
    </recommendedName>
    <alternativeName>
        <fullName evidence="3">3-nitropropanoic acid biosynthesis cluster protein B</fullName>
    </alternativeName>
</protein>
<dbReference type="EC" id="4.1.1.-" evidence="1"/>
<dbReference type="EMBL" id="ADNJ02000010">
    <property type="protein sequence ID" value="EFY96726.1"/>
    <property type="molecule type" value="Genomic_DNA"/>
</dbReference>
<dbReference type="RefSeq" id="XP_007823976.1">
    <property type="nucleotide sequence ID" value="XM_007825785.1"/>
</dbReference>
<dbReference type="SMR" id="E9F688"/>
<dbReference type="GeneID" id="19262073"/>
<dbReference type="KEGG" id="maj:MAA_07787"/>
<dbReference type="HOGENOM" id="CLU_070025_3_2_1"/>
<dbReference type="OrthoDB" id="104509at2759"/>
<dbReference type="Proteomes" id="UP000002498">
    <property type="component" value="Unassembled WGS sequence"/>
</dbReference>
<dbReference type="GO" id="GO:0016831">
    <property type="term" value="F:carboxy-lyase activity"/>
    <property type="evidence" value="ECO:0007669"/>
    <property type="project" value="UniProtKB-KW"/>
</dbReference>
<dbReference type="GO" id="GO:0051920">
    <property type="term" value="F:peroxiredoxin activity"/>
    <property type="evidence" value="ECO:0007669"/>
    <property type="project" value="InterPro"/>
</dbReference>
<dbReference type="Gene3D" id="1.20.1290.10">
    <property type="entry name" value="AhpD-like"/>
    <property type="match status" value="1"/>
</dbReference>
<dbReference type="InterPro" id="IPR052512">
    <property type="entry name" value="4CMD/NDH-1_regulator"/>
</dbReference>
<dbReference type="InterPro" id="IPR029032">
    <property type="entry name" value="AhpD-like"/>
</dbReference>
<dbReference type="InterPro" id="IPR003779">
    <property type="entry name" value="CMD-like"/>
</dbReference>
<dbReference type="PANTHER" id="PTHR33570">
    <property type="entry name" value="4-CARBOXYMUCONOLACTONE DECARBOXYLASE FAMILY PROTEIN"/>
    <property type="match status" value="1"/>
</dbReference>
<dbReference type="PANTHER" id="PTHR33570:SF2">
    <property type="entry name" value="CARBOXYMUCONOLACTONE DECARBOXYLASE-LIKE DOMAIN-CONTAINING PROTEIN"/>
    <property type="match status" value="1"/>
</dbReference>
<dbReference type="Pfam" id="PF02627">
    <property type="entry name" value="CMD"/>
    <property type="match status" value="1"/>
</dbReference>
<dbReference type="SUPFAM" id="SSF69118">
    <property type="entry name" value="AhpD-like"/>
    <property type="match status" value="1"/>
</dbReference>
<keyword id="KW-0210">Decarboxylase</keyword>
<keyword id="KW-0456">Lyase</keyword>
<feature type="chain" id="PRO_0000461475" description="Nitrosuccinic acid decarboxylase npaB">
    <location>
        <begin position="1"/>
        <end position="143"/>
    </location>
</feature>
<comment type="function">
    <text evidence="1 2">Nitrosuccinic acid decarboxylase; part of the gene cluster that mediates the biosynthesis of the deadly neurotoxic nitroalkane 3-nitropropanoic acid (3-NPA) that acts as an antimetabolite of succinate and irreversibly inhibits succinate dehydrogenase and disrupts mitochondrial oxidative phosphorylation (PubMed:38588324). NpaB facilitates decarboxylation of nitrosuccinic acid produced by the nitrosuccinic acid synthase npaA to yield the final product of the cluster, the lethal mycotoxin 3-NPA (By similarity).</text>
</comment>
<comment type="cofactor">
    <cofactor evidence="1">
        <name>Mg(2+)</name>
        <dbReference type="ChEBI" id="CHEBI:18420"/>
    </cofactor>
</comment>
<comment type="pathway">
    <text evidence="1">Mycotoxin biosynthesis.</text>
</comment>
<comment type="similarity">
    <text evidence="4">Belongs to the carboxymuconolactone decarboxylase family.</text>
</comment>
<gene>
    <name evidence="3" type="primary">npaB</name>
    <name type="ORF">MAA_07787</name>
</gene>
<evidence type="ECO:0000250" key="1">
    <source>
        <dbReference type="UniProtKB" id="Q2U3H9"/>
    </source>
</evidence>
<evidence type="ECO:0000269" key="2">
    <source>
    </source>
</evidence>
<evidence type="ECO:0000303" key="3">
    <source>
    </source>
</evidence>
<evidence type="ECO:0000305" key="4"/>
<sequence>MSSDATNDELHRRLFDEGIKVRKDVLGSEYVENALRNATPFTRPGQELITEWAWGTVWQRPGLDRKQRSLLTLGLIIGQKAWLELGLHTRGAINNGVTELEIREAVLHAAVYCGTPSCIEAMIVTQKTINDMVDKGEYKRPEN</sequence>
<reference key="1">
    <citation type="journal article" date="2011" name="PLoS Genet.">
        <title>Genome sequencing and comparative transcriptomics of the model entomopathogenic fungi Metarhizium anisopliae and M. acridum.</title>
        <authorList>
            <person name="Gao Q."/>
            <person name="Jin K."/>
            <person name="Ying S.-H."/>
            <person name="Zhang Y."/>
            <person name="Xiao G."/>
            <person name="Shang Y."/>
            <person name="Duan Z."/>
            <person name="Hu X."/>
            <person name="Xie X.-Q."/>
            <person name="Zhou G."/>
            <person name="Peng G."/>
            <person name="Luo Z."/>
            <person name="Huang W."/>
            <person name="Wang B."/>
            <person name="Fang W."/>
            <person name="Wang S."/>
            <person name="Zhong Y."/>
            <person name="Ma L.-J."/>
            <person name="St Leger R.J."/>
            <person name="Zhao G.-P."/>
            <person name="Pei Y."/>
            <person name="Feng M.-G."/>
            <person name="Xia Y."/>
            <person name="Wang C."/>
        </authorList>
    </citation>
    <scope>NUCLEOTIDE SEQUENCE [LARGE SCALE GENOMIC DNA]</scope>
    <source>
        <strain>ARSEF 23 / ATCC MYA-3075</strain>
    </source>
</reference>
<reference key="2">
    <citation type="journal article" date="2014" name="Proc. Natl. Acad. Sci. U.S.A.">
        <title>Trajectory and genomic determinants of fungal-pathogen speciation and host adaptation.</title>
        <authorList>
            <person name="Hu X."/>
            <person name="Xiao G."/>
            <person name="Zheng P."/>
            <person name="Shang Y."/>
            <person name="Su Y."/>
            <person name="Zhang X."/>
            <person name="Liu X."/>
            <person name="Zhan S."/>
            <person name="St Leger R.J."/>
            <person name="Wang C."/>
        </authorList>
    </citation>
    <scope>GENOME REANNOTATION</scope>
    <source>
        <strain>ARSEF 23 / ATCC MYA-3075</strain>
    </source>
</reference>
<reference key="3">
    <citation type="journal article" date="2024" name="Org. Lett.">
        <title>How fungi biosynthesize 3-nitropropanoic acid: the simplest yet lethal mycotoxin.</title>
        <authorList>
            <person name="Johnson C.W."/>
            <person name="Ohashi M."/>
            <person name="Tang Y."/>
        </authorList>
    </citation>
    <scope>IDENTIFICATION</scope>
    <scope>FUNCTION</scope>
</reference>
<name>NPAB_METRA</name>
<organism>
    <name type="scientific">Metarhizium robertsii (strain ARSEF 23 / ATCC MYA-3075)</name>
    <name type="common">Metarhizium anisopliae (strain ARSEF 23)</name>
    <dbReference type="NCBI Taxonomy" id="655844"/>
    <lineage>
        <taxon>Eukaryota</taxon>
        <taxon>Fungi</taxon>
        <taxon>Dikarya</taxon>
        <taxon>Ascomycota</taxon>
        <taxon>Pezizomycotina</taxon>
        <taxon>Sordariomycetes</taxon>
        <taxon>Hypocreomycetidae</taxon>
        <taxon>Hypocreales</taxon>
        <taxon>Clavicipitaceae</taxon>
        <taxon>Metarhizium</taxon>
    </lineage>
</organism>
<proteinExistence type="inferred from homology"/>
<accession>E9F688</accession>